<evidence type="ECO:0000255" key="1">
    <source>
        <dbReference type="HAMAP-Rule" id="MF_00336"/>
    </source>
</evidence>
<organism>
    <name type="scientific">Brachyspira hyodysenteriae (strain ATCC 49526 / WA1)</name>
    <dbReference type="NCBI Taxonomy" id="565034"/>
    <lineage>
        <taxon>Bacteria</taxon>
        <taxon>Pseudomonadati</taxon>
        <taxon>Spirochaetota</taxon>
        <taxon>Spirochaetia</taxon>
        <taxon>Brachyspirales</taxon>
        <taxon>Brachyspiraceae</taxon>
        <taxon>Brachyspira</taxon>
    </lineage>
</organism>
<keyword id="KW-0067">ATP-binding</keyword>
<keyword id="KW-0093">Biotin biosynthesis</keyword>
<keyword id="KW-0963">Cytoplasm</keyword>
<keyword id="KW-0436">Ligase</keyword>
<keyword id="KW-0460">Magnesium</keyword>
<keyword id="KW-0479">Metal-binding</keyword>
<keyword id="KW-0547">Nucleotide-binding</keyword>
<proteinExistence type="inferred from homology"/>
<feature type="chain" id="PRO_1000133203" description="ATP-dependent dethiobiotin synthetase BioD">
    <location>
        <begin position="1"/>
        <end position="221"/>
    </location>
</feature>
<feature type="active site" evidence="1">
    <location>
        <position position="38"/>
    </location>
</feature>
<feature type="binding site" evidence="1">
    <location>
        <begin position="13"/>
        <end position="18"/>
    </location>
    <ligand>
        <name>ATP</name>
        <dbReference type="ChEBI" id="CHEBI:30616"/>
    </ligand>
</feature>
<feature type="binding site" evidence="1">
    <location>
        <position position="17"/>
    </location>
    <ligand>
        <name>Mg(2+)</name>
        <dbReference type="ChEBI" id="CHEBI:18420"/>
    </ligand>
</feature>
<feature type="binding site" evidence="1">
    <location>
        <position position="42"/>
    </location>
    <ligand>
        <name>substrate</name>
    </ligand>
</feature>
<feature type="binding site" evidence="1">
    <location>
        <position position="51"/>
    </location>
    <ligand>
        <name>ATP</name>
        <dbReference type="ChEBI" id="CHEBI:30616"/>
    </ligand>
</feature>
<feature type="binding site" evidence="1">
    <location>
        <position position="51"/>
    </location>
    <ligand>
        <name>Mg(2+)</name>
        <dbReference type="ChEBI" id="CHEBI:18420"/>
    </ligand>
</feature>
<feature type="binding site" evidence="1">
    <location>
        <begin position="112"/>
        <end position="115"/>
    </location>
    <ligand>
        <name>ATP</name>
        <dbReference type="ChEBI" id="CHEBI:30616"/>
    </ligand>
</feature>
<feature type="binding site" evidence="1">
    <location>
        <position position="112"/>
    </location>
    <ligand>
        <name>Mg(2+)</name>
        <dbReference type="ChEBI" id="CHEBI:18420"/>
    </ligand>
</feature>
<feature type="binding site" evidence="1">
    <location>
        <begin position="176"/>
        <end position="177"/>
    </location>
    <ligand>
        <name>ATP</name>
        <dbReference type="ChEBI" id="CHEBI:30616"/>
    </ligand>
</feature>
<protein>
    <recommendedName>
        <fullName evidence="1">ATP-dependent dethiobiotin synthetase BioD</fullName>
        <ecNumber evidence="1">6.3.3.3</ecNumber>
    </recommendedName>
    <alternativeName>
        <fullName evidence="1">DTB synthetase</fullName>
        <shortName evidence="1">DTBS</shortName>
    </alternativeName>
    <alternativeName>
        <fullName evidence="1">Dethiobiotin synthase</fullName>
    </alternativeName>
</protein>
<gene>
    <name evidence="1" type="primary">bioD</name>
    <name type="ordered locus">BHWA1_02061</name>
</gene>
<comment type="function">
    <text evidence="1">Catalyzes a mechanistically unusual reaction, the ATP-dependent insertion of CO2 between the N7 and N8 nitrogen atoms of 7,8-diaminopelargonic acid (DAPA, also called 7,8-diammoniononanoate) to form a ureido ring.</text>
</comment>
<comment type="catalytic activity">
    <reaction evidence="1">
        <text>(7R,8S)-7,8-diammoniononanoate + CO2 + ATP = (4R,5S)-dethiobiotin + ADP + phosphate + 3 H(+)</text>
        <dbReference type="Rhea" id="RHEA:15805"/>
        <dbReference type="ChEBI" id="CHEBI:15378"/>
        <dbReference type="ChEBI" id="CHEBI:16526"/>
        <dbReference type="ChEBI" id="CHEBI:30616"/>
        <dbReference type="ChEBI" id="CHEBI:43474"/>
        <dbReference type="ChEBI" id="CHEBI:149469"/>
        <dbReference type="ChEBI" id="CHEBI:149473"/>
        <dbReference type="ChEBI" id="CHEBI:456216"/>
        <dbReference type="EC" id="6.3.3.3"/>
    </reaction>
</comment>
<comment type="cofactor">
    <cofactor evidence="1">
        <name>Mg(2+)</name>
        <dbReference type="ChEBI" id="CHEBI:18420"/>
    </cofactor>
</comment>
<comment type="pathway">
    <text evidence="1">Cofactor biosynthesis; biotin biosynthesis; biotin from 7,8-diaminononanoate: step 1/2.</text>
</comment>
<comment type="subunit">
    <text evidence="1">Homodimer.</text>
</comment>
<comment type="subcellular location">
    <subcellularLocation>
        <location evidence="1">Cytoplasm</location>
    </subcellularLocation>
</comment>
<comment type="similarity">
    <text evidence="1">Belongs to the dethiobiotin synthetase family.</text>
</comment>
<accession>C0QVL9</accession>
<sequence>MAKAIFITATGTDIGKTYVSGLIAKHMKDKGLNIGYYKAALSGSLDITDSDAWYVKQQADLLDSYDEMVSYTYKHAYSPHLAAQIEGNPPDIKVIKNAYENINKKHDYMIVEGSGGIICPIRYDNNQKIFLEDIIKELNIPSLIIADAGLGTINSAVLTIEYMRSKNLKVNGVILNRFEMANEMHDDNKKMIEEMTGVKIIGIVIDGILKLDEKNIETLFE</sequence>
<name>BIOD_BRAHW</name>
<reference key="1">
    <citation type="journal article" date="2009" name="PLoS ONE">
        <title>Genome sequence of the pathogenic intestinal spirochete Brachyspira hyodysenteriae reveals adaptations to its lifestyle in the porcine large intestine.</title>
        <authorList>
            <person name="Bellgard M.I."/>
            <person name="Wanchanthuek P."/>
            <person name="La T."/>
            <person name="Ryan K."/>
            <person name="Moolhuijzen P."/>
            <person name="Albertyn Z."/>
            <person name="Shaban B."/>
            <person name="Motro Y."/>
            <person name="Dunn D.S."/>
            <person name="Schibeci D."/>
            <person name="Hunter A."/>
            <person name="Barrero R."/>
            <person name="Phillips N.D."/>
            <person name="Hampson D.J."/>
        </authorList>
    </citation>
    <scope>NUCLEOTIDE SEQUENCE [LARGE SCALE GENOMIC DNA]</scope>
    <source>
        <strain>ATCC 49526 / WA1</strain>
    </source>
</reference>
<dbReference type="EC" id="6.3.3.3" evidence="1"/>
<dbReference type="EMBL" id="CP001357">
    <property type="protein sequence ID" value="ACN84520.1"/>
    <property type="molecule type" value="Genomic_DNA"/>
</dbReference>
<dbReference type="RefSeq" id="WP_012671558.1">
    <property type="nucleotide sequence ID" value="NC_012225.1"/>
</dbReference>
<dbReference type="SMR" id="C0QVL9"/>
<dbReference type="STRING" id="565034.BHWA1_02061"/>
<dbReference type="GeneID" id="63963214"/>
<dbReference type="KEGG" id="bhy:BHWA1_02061"/>
<dbReference type="eggNOG" id="COG0132">
    <property type="taxonomic scope" value="Bacteria"/>
</dbReference>
<dbReference type="HOGENOM" id="CLU_072551_3_0_12"/>
<dbReference type="UniPathway" id="UPA00078">
    <property type="reaction ID" value="UER00161"/>
</dbReference>
<dbReference type="Proteomes" id="UP000001803">
    <property type="component" value="Chromosome"/>
</dbReference>
<dbReference type="GO" id="GO:0005829">
    <property type="term" value="C:cytosol"/>
    <property type="evidence" value="ECO:0007669"/>
    <property type="project" value="TreeGrafter"/>
</dbReference>
<dbReference type="GO" id="GO:0005524">
    <property type="term" value="F:ATP binding"/>
    <property type="evidence" value="ECO:0007669"/>
    <property type="project" value="UniProtKB-UniRule"/>
</dbReference>
<dbReference type="GO" id="GO:0004141">
    <property type="term" value="F:dethiobiotin synthase activity"/>
    <property type="evidence" value="ECO:0007669"/>
    <property type="project" value="UniProtKB-UniRule"/>
</dbReference>
<dbReference type="GO" id="GO:0000287">
    <property type="term" value="F:magnesium ion binding"/>
    <property type="evidence" value="ECO:0007669"/>
    <property type="project" value="UniProtKB-UniRule"/>
</dbReference>
<dbReference type="GO" id="GO:0009102">
    <property type="term" value="P:biotin biosynthetic process"/>
    <property type="evidence" value="ECO:0007669"/>
    <property type="project" value="UniProtKB-UniRule"/>
</dbReference>
<dbReference type="CDD" id="cd03109">
    <property type="entry name" value="DTBS"/>
    <property type="match status" value="1"/>
</dbReference>
<dbReference type="Gene3D" id="3.40.50.300">
    <property type="entry name" value="P-loop containing nucleotide triphosphate hydrolases"/>
    <property type="match status" value="1"/>
</dbReference>
<dbReference type="HAMAP" id="MF_00336">
    <property type="entry name" value="BioD"/>
    <property type="match status" value="1"/>
</dbReference>
<dbReference type="InterPro" id="IPR004472">
    <property type="entry name" value="DTB_synth_BioD"/>
</dbReference>
<dbReference type="InterPro" id="IPR027417">
    <property type="entry name" value="P-loop_NTPase"/>
</dbReference>
<dbReference type="NCBIfam" id="TIGR00347">
    <property type="entry name" value="bioD"/>
    <property type="match status" value="1"/>
</dbReference>
<dbReference type="PANTHER" id="PTHR43210:SF2">
    <property type="entry name" value="ATP-DEPENDENT DETHIOBIOTIN SYNTHETASE BIOD 2"/>
    <property type="match status" value="1"/>
</dbReference>
<dbReference type="PANTHER" id="PTHR43210">
    <property type="entry name" value="DETHIOBIOTIN SYNTHETASE"/>
    <property type="match status" value="1"/>
</dbReference>
<dbReference type="Pfam" id="PF13500">
    <property type="entry name" value="AAA_26"/>
    <property type="match status" value="1"/>
</dbReference>
<dbReference type="PIRSF" id="PIRSF006755">
    <property type="entry name" value="DTB_synth"/>
    <property type="match status" value="1"/>
</dbReference>
<dbReference type="SUPFAM" id="SSF52540">
    <property type="entry name" value="P-loop containing nucleoside triphosphate hydrolases"/>
    <property type="match status" value="1"/>
</dbReference>